<proteinExistence type="inferred from homology"/>
<name>GLMS_STRR6</name>
<reference key="1">
    <citation type="journal article" date="2001" name="J. Bacteriol.">
        <title>Genome of the bacterium Streptococcus pneumoniae strain R6.</title>
        <authorList>
            <person name="Hoskins J."/>
            <person name="Alborn W.E. Jr."/>
            <person name="Arnold J."/>
            <person name="Blaszczak L.C."/>
            <person name="Burgett S."/>
            <person name="DeHoff B.S."/>
            <person name="Estrem S.T."/>
            <person name="Fritz L."/>
            <person name="Fu D.-J."/>
            <person name="Fuller W."/>
            <person name="Geringer C."/>
            <person name="Gilmour R."/>
            <person name="Glass J.S."/>
            <person name="Khoja H."/>
            <person name="Kraft A.R."/>
            <person name="Lagace R.E."/>
            <person name="LeBlanc D.J."/>
            <person name="Lee L.N."/>
            <person name="Lefkowitz E.J."/>
            <person name="Lu J."/>
            <person name="Matsushima P."/>
            <person name="McAhren S.M."/>
            <person name="McHenney M."/>
            <person name="McLeaster K."/>
            <person name="Mundy C.W."/>
            <person name="Nicas T.I."/>
            <person name="Norris F.H."/>
            <person name="O'Gara M."/>
            <person name="Peery R.B."/>
            <person name="Robertson G.T."/>
            <person name="Rockey P."/>
            <person name="Sun P.-M."/>
            <person name="Winkler M.E."/>
            <person name="Yang Y."/>
            <person name="Young-Bellido M."/>
            <person name="Zhao G."/>
            <person name="Zook C.A."/>
            <person name="Baltz R.H."/>
            <person name="Jaskunas S.R."/>
            <person name="Rosteck P.R. Jr."/>
            <person name="Skatrud P.L."/>
            <person name="Glass J.I."/>
        </authorList>
    </citation>
    <scope>NUCLEOTIDE SEQUENCE [LARGE SCALE GENOMIC DNA]</scope>
    <source>
        <strain>ATCC BAA-255 / R6</strain>
    </source>
</reference>
<accession>Q8DRA8</accession>
<comment type="function">
    <text evidence="1">Catalyzes the first step in hexosamine metabolism, converting fructose-6P into glucosamine-6P using glutamine as a nitrogen source.</text>
</comment>
<comment type="catalytic activity">
    <reaction evidence="1">
        <text>D-fructose 6-phosphate + L-glutamine = D-glucosamine 6-phosphate + L-glutamate</text>
        <dbReference type="Rhea" id="RHEA:13237"/>
        <dbReference type="ChEBI" id="CHEBI:29985"/>
        <dbReference type="ChEBI" id="CHEBI:58359"/>
        <dbReference type="ChEBI" id="CHEBI:58725"/>
        <dbReference type="ChEBI" id="CHEBI:61527"/>
        <dbReference type="EC" id="2.6.1.16"/>
    </reaction>
</comment>
<comment type="subunit">
    <text evidence="1">Homodimer.</text>
</comment>
<comment type="subcellular location">
    <subcellularLocation>
        <location evidence="1">Cytoplasm</location>
    </subcellularLocation>
</comment>
<protein>
    <recommendedName>
        <fullName evidence="1">Glutamine--fructose-6-phosphate aminotransferase [isomerizing]</fullName>
        <ecNumber evidence="1">2.6.1.16</ecNumber>
    </recommendedName>
    <alternativeName>
        <fullName evidence="1">D-fructose-6-phosphate amidotransferase</fullName>
    </alternativeName>
    <alternativeName>
        <fullName evidence="1">GFAT</fullName>
    </alternativeName>
    <alternativeName>
        <fullName evidence="1">Glucosamine-6-phosphate synthase</fullName>
    </alternativeName>
    <alternativeName>
        <fullName evidence="1">Hexosephosphate aminotransferase</fullName>
    </alternativeName>
    <alternativeName>
        <fullName evidence="1">L-glutamine--D-fructose-6-phosphate amidotransferase</fullName>
    </alternativeName>
</protein>
<gene>
    <name evidence="1" type="primary">glmS</name>
    <name type="ordered locus">spr0245</name>
</gene>
<organism>
    <name type="scientific">Streptococcus pneumoniae (strain ATCC BAA-255 / R6)</name>
    <dbReference type="NCBI Taxonomy" id="171101"/>
    <lineage>
        <taxon>Bacteria</taxon>
        <taxon>Bacillati</taxon>
        <taxon>Bacillota</taxon>
        <taxon>Bacilli</taxon>
        <taxon>Lactobacillales</taxon>
        <taxon>Streptococcaceae</taxon>
        <taxon>Streptococcus</taxon>
    </lineage>
</organism>
<feature type="initiator methionine" description="Removed" evidence="1">
    <location>
        <position position="1"/>
    </location>
</feature>
<feature type="chain" id="PRO_0000135392" description="Glutamine--fructose-6-phosphate aminotransferase [isomerizing]">
    <location>
        <begin position="2"/>
        <end position="602"/>
    </location>
</feature>
<feature type="domain" description="Glutamine amidotransferase type-2" evidence="1">
    <location>
        <begin position="2"/>
        <end position="217"/>
    </location>
</feature>
<feature type="domain" description="SIS 1" evidence="1">
    <location>
        <begin position="283"/>
        <end position="422"/>
    </location>
</feature>
<feature type="domain" description="SIS 2" evidence="1">
    <location>
        <begin position="455"/>
        <end position="592"/>
    </location>
</feature>
<feature type="region of interest" description="Disordered" evidence="2">
    <location>
        <begin position="67"/>
        <end position="87"/>
    </location>
</feature>
<feature type="compositionally biased region" description="Basic and acidic residues" evidence="2">
    <location>
        <begin position="77"/>
        <end position="87"/>
    </location>
</feature>
<feature type="active site" description="Nucleophile; for GATase activity" evidence="1">
    <location>
        <position position="2"/>
    </location>
</feature>
<feature type="active site" description="For Fru-6P isomerization activity" evidence="1">
    <location>
        <position position="597"/>
    </location>
</feature>
<evidence type="ECO:0000255" key="1">
    <source>
        <dbReference type="HAMAP-Rule" id="MF_00164"/>
    </source>
</evidence>
<evidence type="ECO:0000256" key="2">
    <source>
        <dbReference type="SAM" id="MobiDB-lite"/>
    </source>
</evidence>
<keyword id="KW-0032">Aminotransferase</keyword>
<keyword id="KW-0963">Cytoplasm</keyword>
<keyword id="KW-0315">Glutamine amidotransferase</keyword>
<keyword id="KW-1185">Reference proteome</keyword>
<keyword id="KW-0677">Repeat</keyword>
<keyword id="KW-0808">Transferase</keyword>
<dbReference type="EC" id="2.6.1.16" evidence="1"/>
<dbReference type="EMBL" id="AE007317">
    <property type="protein sequence ID" value="AAK99049.1"/>
    <property type="molecule type" value="Genomic_DNA"/>
</dbReference>
<dbReference type="PIR" id="E97902">
    <property type="entry name" value="E97902"/>
</dbReference>
<dbReference type="RefSeq" id="NP_357839.1">
    <property type="nucleotide sequence ID" value="NC_003098.1"/>
</dbReference>
<dbReference type="RefSeq" id="WP_000334246.1">
    <property type="nucleotide sequence ID" value="NC_003098.1"/>
</dbReference>
<dbReference type="SMR" id="Q8DRA8"/>
<dbReference type="STRING" id="171101.spr0245"/>
<dbReference type="KEGG" id="spr:spr0245"/>
<dbReference type="PATRIC" id="fig|171101.6.peg.279"/>
<dbReference type="eggNOG" id="COG0449">
    <property type="taxonomic scope" value="Bacteria"/>
</dbReference>
<dbReference type="HOGENOM" id="CLU_012520_7_1_9"/>
<dbReference type="Proteomes" id="UP000000586">
    <property type="component" value="Chromosome"/>
</dbReference>
<dbReference type="GO" id="GO:0005829">
    <property type="term" value="C:cytosol"/>
    <property type="evidence" value="ECO:0000318"/>
    <property type="project" value="GO_Central"/>
</dbReference>
<dbReference type="GO" id="GO:0097367">
    <property type="term" value="F:carbohydrate derivative binding"/>
    <property type="evidence" value="ECO:0007669"/>
    <property type="project" value="InterPro"/>
</dbReference>
<dbReference type="GO" id="GO:0004360">
    <property type="term" value="F:glutamine-fructose-6-phosphate transaminase (isomerizing) activity"/>
    <property type="evidence" value="ECO:0000318"/>
    <property type="project" value="GO_Central"/>
</dbReference>
<dbReference type="GO" id="GO:0005975">
    <property type="term" value="P:carbohydrate metabolic process"/>
    <property type="evidence" value="ECO:0007669"/>
    <property type="project" value="UniProtKB-UniRule"/>
</dbReference>
<dbReference type="GO" id="GO:0006002">
    <property type="term" value="P:fructose 6-phosphate metabolic process"/>
    <property type="evidence" value="ECO:0000318"/>
    <property type="project" value="GO_Central"/>
</dbReference>
<dbReference type="GO" id="GO:0006487">
    <property type="term" value="P:protein N-linked glycosylation"/>
    <property type="evidence" value="ECO:0000318"/>
    <property type="project" value="GO_Central"/>
</dbReference>
<dbReference type="GO" id="GO:0006047">
    <property type="term" value="P:UDP-N-acetylglucosamine metabolic process"/>
    <property type="evidence" value="ECO:0000318"/>
    <property type="project" value="GO_Central"/>
</dbReference>
<dbReference type="CDD" id="cd00714">
    <property type="entry name" value="GFAT"/>
    <property type="match status" value="1"/>
</dbReference>
<dbReference type="CDD" id="cd05008">
    <property type="entry name" value="SIS_GlmS_GlmD_1"/>
    <property type="match status" value="1"/>
</dbReference>
<dbReference type="CDD" id="cd05009">
    <property type="entry name" value="SIS_GlmS_GlmD_2"/>
    <property type="match status" value="1"/>
</dbReference>
<dbReference type="FunFam" id="3.40.50.10490:FF:000001">
    <property type="entry name" value="Glutamine--fructose-6-phosphate aminotransferase [isomerizing]"/>
    <property type="match status" value="1"/>
</dbReference>
<dbReference type="FunFam" id="3.40.50.10490:FF:000022">
    <property type="entry name" value="Glutamine--fructose-6-phosphate aminotransferase [isomerizing]"/>
    <property type="match status" value="1"/>
</dbReference>
<dbReference type="FunFam" id="3.60.20.10:FF:000006">
    <property type="entry name" value="Glutamine--fructose-6-phosphate aminotransferase [isomerizing]"/>
    <property type="match status" value="1"/>
</dbReference>
<dbReference type="Gene3D" id="3.40.50.10490">
    <property type="entry name" value="Glucose-6-phosphate isomerase like protein, domain 1"/>
    <property type="match status" value="2"/>
</dbReference>
<dbReference type="Gene3D" id="3.60.20.10">
    <property type="entry name" value="Glutamine Phosphoribosylpyrophosphate, subunit 1, domain 1"/>
    <property type="match status" value="1"/>
</dbReference>
<dbReference type="HAMAP" id="MF_00164">
    <property type="entry name" value="GlmS"/>
    <property type="match status" value="1"/>
</dbReference>
<dbReference type="InterPro" id="IPR017932">
    <property type="entry name" value="GATase_2_dom"/>
</dbReference>
<dbReference type="InterPro" id="IPR005855">
    <property type="entry name" value="GFAT"/>
</dbReference>
<dbReference type="InterPro" id="IPR047084">
    <property type="entry name" value="GFAT_N"/>
</dbReference>
<dbReference type="InterPro" id="IPR035466">
    <property type="entry name" value="GlmS/AgaS_SIS"/>
</dbReference>
<dbReference type="InterPro" id="IPR035490">
    <property type="entry name" value="GlmS/FrlB_SIS"/>
</dbReference>
<dbReference type="InterPro" id="IPR029055">
    <property type="entry name" value="Ntn_hydrolases_N"/>
</dbReference>
<dbReference type="InterPro" id="IPR001347">
    <property type="entry name" value="SIS_dom"/>
</dbReference>
<dbReference type="InterPro" id="IPR046348">
    <property type="entry name" value="SIS_dom_sf"/>
</dbReference>
<dbReference type="NCBIfam" id="TIGR01135">
    <property type="entry name" value="glmS"/>
    <property type="match status" value="1"/>
</dbReference>
<dbReference type="NCBIfam" id="NF001484">
    <property type="entry name" value="PRK00331.1"/>
    <property type="match status" value="1"/>
</dbReference>
<dbReference type="PANTHER" id="PTHR10937">
    <property type="entry name" value="GLUCOSAMINE--FRUCTOSE-6-PHOSPHATE AMINOTRANSFERASE, ISOMERIZING"/>
    <property type="match status" value="1"/>
</dbReference>
<dbReference type="PANTHER" id="PTHR10937:SF0">
    <property type="entry name" value="GLUTAMINE--FRUCTOSE-6-PHOSPHATE TRANSAMINASE (ISOMERIZING)"/>
    <property type="match status" value="1"/>
</dbReference>
<dbReference type="Pfam" id="PF13522">
    <property type="entry name" value="GATase_6"/>
    <property type="match status" value="1"/>
</dbReference>
<dbReference type="Pfam" id="PF01380">
    <property type="entry name" value="SIS"/>
    <property type="match status" value="2"/>
</dbReference>
<dbReference type="SUPFAM" id="SSF56235">
    <property type="entry name" value="N-terminal nucleophile aminohydrolases (Ntn hydrolases)"/>
    <property type="match status" value="1"/>
</dbReference>
<dbReference type="SUPFAM" id="SSF53697">
    <property type="entry name" value="SIS domain"/>
    <property type="match status" value="1"/>
</dbReference>
<dbReference type="PROSITE" id="PS51278">
    <property type="entry name" value="GATASE_TYPE_2"/>
    <property type="match status" value="1"/>
</dbReference>
<dbReference type="PROSITE" id="PS51464">
    <property type="entry name" value="SIS"/>
    <property type="match status" value="2"/>
</dbReference>
<sequence>MCGIVGVVGNTNATDILIQGLEKLEYRGYDSAGIFVLDGADNHLVKAVGRIAELSAKTAGVEGTTGIGHTRWATHGKPTEDNAHPHRSETERFVLVHNGVIENYLEIKEEYLAGHHFKGQTDTEIAVHLIGKFAEEDGLSVLEAFKKALHIIRGSYAFALIDSENPDVIYVAKNKSPLLIGLGEGYNMVCSDAMAMIRETNQYMEIHDQELVIVKADSVEVQDYDGNSRERASYTAELDLSDIGKGTYPYYMLKEIDEQPTVMRKLIQAYTDDAGQVVIDPAIIKAVQDADRIYILAAGTSYHAGFASKKMLEELTDTPVELGISSEWGYGMPLLSKKPLFIFISQSGETADSRQVLVKANEMGIPSLTVTNVPGSTLSREANYTMLLHAGPEIAVASTKAYTAQIAALAFLAKAVGEANGNAKAQAFDLVHELSIVAQSIESTLSEKETIEAKVRELLETTRNAFYIGRGQDYYVAMEASLKLKEISYIQCEGFAAGELKHGTIALIEEGTPVLALLSDPVLANHTRGNIQEVAARGAKVLTIAEENVAKDTDDIVLTTVHPYLSPISMVVPTQLVAYFATLHRGLDVDKPRNLAKSVTVE</sequence>